<feature type="chain" id="PRO_0000299168" description="LMBR1 domain-containing protein 2 homolog">
    <location>
        <begin position="1"/>
        <end position="694"/>
    </location>
</feature>
<feature type="topological domain" description="Extracellular" evidence="1">
    <location>
        <begin position="1"/>
        <end position="3"/>
    </location>
</feature>
<feature type="transmembrane region" description="Helical" evidence="1">
    <location>
        <begin position="4"/>
        <end position="26"/>
    </location>
</feature>
<feature type="topological domain" description="Cytoplasmic" evidence="1">
    <location>
        <begin position="27"/>
        <end position="30"/>
    </location>
</feature>
<feature type="transmembrane region" description="Helical" evidence="1">
    <location>
        <begin position="31"/>
        <end position="51"/>
    </location>
</feature>
<feature type="topological domain" description="Extracellular" evidence="1">
    <location>
        <begin position="52"/>
        <end position="106"/>
    </location>
</feature>
<feature type="transmembrane region" description="Helical" evidence="1">
    <location>
        <begin position="107"/>
        <end position="127"/>
    </location>
</feature>
<feature type="topological domain" description="Cytoplasmic" evidence="1">
    <location>
        <begin position="128"/>
        <end position="144"/>
    </location>
</feature>
<feature type="transmembrane region" description="Helical" evidence="1">
    <location>
        <begin position="145"/>
        <end position="165"/>
    </location>
</feature>
<feature type="topological domain" description="Extracellular" evidence="1">
    <location>
        <begin position="166"/>
        <end position="181"/>
    </location>
</feature>
<feature type="transmembrane region" description="Helical" evidence="1">
    <location>
        <begin position="182"/>
        <end position="202"/>
    </location>
</feature>
<feature type="topological domain" description="Cytoplasmic" evidence="1">
    <location>
        <begin position="203"/>
        <end position="381"/>
    </location>
</feature>
<feature type="transmembrane region" description="Helical" evidence="1">
    <location>
        <begin position="382"/>
        <end position="402"/>
    </location>
</feature>
<feature type="topological domain" description="Extracellular" evidence="1">
    <location>
        <begin position="403"/>
        <end position="426"/>
    </location>
</feature>
<feature type="transmembrane region" description="Helical" evidence="1">
    <location>
        <begin position="427"/>
        <end position="447"/>
    </location>
</feature>
<feature type="topological domain" description="Cytoplasmic" evidence="1">
    <location>
        <begin position="448"/>
        <end position="467"/>
    </location>
</feature>
<feature type="transmembrane region" description="Helical" evidence="1">
    <location>
        <begin position="468"/>
        <end position="488"/>
    </location>
</feature>
<feature type="topological domain" description="Extracellular" evidence="1">
    <location>
        <begin position="489"/>
        <end position="514"/>
    </location>
</feature>
<feature type="transmembrane region" description="Helical" evidence="1">
    <location>
        <begin position="515"/>
        <end position="535"/>
    </location>
</feature>
<feature type="topological domain" description="Cytoplasmic" evidence="1">
    <location>
        <begin position="536"/>
        <end position="694"/>
    </location>
</feature>
<feature type="region of interest" description="Disordered" evidence="2">
    <location>
        <begin position="673"/>
        <end position="694"/>
    </location>
</feature>
<feature type="coiled-coil region" evidence="1">
    <location>
        <begin position="222"/>
        <end position="249"/>
    </location>
</feature>
<feature type="coiled-coil region" evidence="1">
    <location>
        <begin position="564"/>
        <end position="592"/>
    </location>
</feature>
<feature type="glycosylation site" description="N-linked (GlcNAc...) asparagine" evidence="1">
    <location>
        <position position="74"/>
    </location>
</feature>
<feature type="glycosylation site" description="N-linked (GlcNAc...) asparagine" evidence="1">
    <location>
        <position position="77"/>
    </location>
</feature>
<feature type="sequence conflict" description="In Ref. 1; AAM50128." evidence="3" ref="1">
    <original>M</original>
    <variation>I</variation>
    <location>
        <position position="393"/>
    </location>
</feature>
<accession>Q8MRQ4</accession>
<accession>Q9VHE2</accession>
<organism>
    <name type="scientific">Drosophila melanogaster</name>
    <name type="common">Fruit fly</name>
    <dbReference type="NCBI Taxonomy" id="7227"/>
    <lineage>
        <taxon>Eukaryota</taxon>
        <taxon>Metazoa</taxon>
        <taxon>Ecdysozoa</taxon>
        <taxon>Arthropoda</taxon>
        <taxon>Hexapoda</taxon>
        <taxon>Insecta</taxon>
        <taxon>Pterygota</taxon>
        <taxon>Neoptera</taxon>
        <taxon>Endopterygota</taxon>
        <taxon>Diptera</taxon>
        <taxon>Brachycera</taxon>
        <taxon>Muscomorpha</taxon>
        <taxon>Ephydroidea</taxon>
        <taxon>Drosophilidae</taxon>
        <taxon>Drosophila</taxon>
        <taxon>Sophophora</taxon>
    </lineage>
</organism>
<dbReference type="EMBL" id="AE014297">
    <property type="protein sequence ID" value="AAF54372.1"/>
    <property type="molecule type" value="Genomic_DNA"/>
</dbReference>
<dbReference type="EMBL" id="AY119474">
    <property type="protein sequence ID" value="AAM50128.1"/>
    <property type="molecule type" value="mRNA"/>
</dbReference>
<dbReference type="RefSeq" id="NP_649890.1">
    <property type="nucleotide sequence ID" value="NM_141633.2"/>
</dbReference>
<dbReference type="SMR" id="Q8MRQ4"/>
<dbReference type="FunCoup" id="Q8MRQ4">
    <property type="interactions" value="1357"/>
</dbReference>
<dbReference type="IntAct" id="Q8MRQ4">
    <property type="interactions" value="2"/>
</dbReference>
<dbReference type="STRING" id="7227.FBpp0081508"/>
<dbReference type="GlyGen" id="Q8MRQ4">
    <property type="glycosylation" value="2 sites"/>
</dbReference>
<dbReference type="PaxDb" id="7227-FBpp0081508"/>
<dbReference type="EnsemblMetazoa" id="FBtr0082030">
    <property type="protein sequence ID" value="FBpp0081508"/>
    <property type="gene ID" value="FBgn0037689"/>
</dbReference>
<dbReference type="GeneID" id="41123"/>
<dbReference type="KEGG" id="dme:Dmel_CG8135"/>
<dbReference type="UCSC" id="CG8135-RA">
    <property type="organism name" value="d. melanogaster"/>
</dbReference>
<dbReference type="AGR" id="FB:FBgn0037689"/>
<dbReference type="FlyBase" id="FBgn0037689">
    <property type="gene designation" value="CG8135"/>
</dbReference>
<dbReference type="VEuPathDB" id="VectorBase:FBgn0037689"/>
<dbReference type="eggNOG" id="KOG2296">
    <property type="taxonomic scope" value="Eukaryota"/>
</dbReference>
<dbReference type="GeneTree" id="ENSGT00390000018651"/>
<dbReference type="HOGENOM" id="CLU_018886_0_0_1"/>
<dbReference type="InParanoid" id="Q8MRQ4"/>
<dbReference type="OMA" id="QLERICY"/>
<dbReference type="OrthoDB" id="203099at2759"/>
<dbReference type="PhylomeDB" id="Q8MRQ4"/>
<dbReference type="BioGRID-ORCS" id="41123">
    <property type="hits" value="0 hits in 1 CRISPR screen"/>
</dbReference>
<dbReference type="GenomeRNAi" id="41123"/>
<dbReference type="PRO" id="PR:Q8MRQ4"/>
<dbReference type="Proteomes" id="UP000000803">
    <property type="component" value="Chromosome 3R"/>
</dbReference>
<dbReference type="Bgee" id="FBgn0037689">
    <property type="expression patterns" value="Expressed in seminal fluid secreting gland and 9 other cell types or tissues"/>
</dbReference>
<dbReference type="GO" id="GO:0016020">
    <property type="term" value="C:membrane"/>
    <property type="evidence" value="ECO:0000318"/>
    <property type="project" value="GO_Central"/>
</dbReference>
<dbReference type="InterPro" id="IPR051584">
    <property type="entry name" value="GPCR-associated_LMBR1"/>
</dbReference>
<dbReference type="InterPro" id="IPR006876">
    <property type="entry name" value="LMBR1-like_membr_prot"/>
</dbReference>
<dbReference type="PANTHER" id="PTHR21355">
    <property type="entry name" value="G-PROTEIN COUPLED RECEPTOR-ASSOCIATED PROTEIN LMBRD2"/>
    <property type="match status" value="1"/>
</dbReference>
<dbReference type="PANTHER" id="PTHR21355:SF0">
    <property type="entry name" value="G-PROTEIN COUPLED RECEPTOR-ASSOCIATED PROTEIN LMBRD2"/>
    <property type="match status" value="1"/>
</dbReference>
<dbReference type="Pfam" id="PF04791">
    <property type="entry name" value="LMBR1"/>
    <property type="match status" value="1"/>
</dbReference>
<evidence type="ECO:0000255" key="1"/>
<evidence type="ECO:0000256" key="2">
    <source>
        <dbReference type="SAM" id="MobiDB-lite"/>
    </source>
</evidence>
<evidence type="ECO:0000305" key="3"/>
<name>LMBD2_DROME</name>
<sequence length="694" mass="78440">MAYLLSFGIVAALFLASISLYRYGNIPRQHILVTLSVLTAWCFSFLIVFTIPLDVTSTLYRQCVEEHRPTPAPNVTNTSSATVGPPPQCQEPWGMVPASVFPNLWRIIYWSSQFLTWLIMPLMQSYLKAGDFTVKGKLKSALIENAIYYGSYLFICGVLLIYIAVKGESLDWQKLKAIASSASNTWGLFLLILLLGYALVEVPRSLWNNAKPGFALQYAYFKAAKLSTEKAEAEEHVDDILESLQGLSRVIPNNHELRPCLETILRKVPIELQERASRNFARTGGSGMGATSSTILPSEKALVRIHKQVIKSLQTLQRTEALWSVQVQTVLHLEDVAKNIHSSDRRFKSEFPRQRTQLERICYSASLQWYWECLLKAPFLKTMCVLTATMSAMVVWSELTFFSRHPVLSIFANVIYVAKESYDFFTIEVFSMVVLCYFFYCTYSTILRIRFLNLYYLAPHHQTNEHSLIFSGMLLCRLTPPMCLNFLGLIHMDTHIIPNRIMETVYTQIMGHMDVIGIISNGFNIYFPMCMLAFCLATWFSLGSRALNALGFQQFLQNETIATELVQEGKDLIAREKRRRQRAEEAMARRRDFNRTDQVLGSDYLSKYRSGGPGGLTSSRTPADGLLRDGDGSFDYAAVASSSALGVPRSLSEEINDRFGVSTQVQVGFRDPDYEAETDGRIVGPPPRGLFDDV</sequence>
<reference key="1">
    <citation type="journal article" date="2000" name="Science">
        <title>The genome sequence of Drosophila melanogaster.</title>
        <authorList>
            <person name="Adams M.D."/>
            <person name="Celniker S.E."/>
            <person name="Holt R.A."/>
            <person name="Evans C.A."/>
            <person name="Gocayne J.D."/>
            <person name="Amanatides P.G."/>
            <person name="Scherer S.E."/>
            <person name="Li P.W."/>
            <person name="Hoskins R.A."/>
            <person name="Galle R.F."/>
            <person name="George R.A."/>
            <person name="Lewis S.E."/>
            <person name="Richards S."/>
            <person name="Ashburner M."/>
            <person name="Henderson S.N."/>
            <person name="Sutton G.G."/>
            <person name="Wortman J.R."/>
            <person name="Yandell M.D."/>
            <person name="Zhang Q."/>
            <person name="Chen L.X."/>
            <person name="Brandon R.C."/>
            <person name="Rogers Y.-H.C."/>
            <person name="Blazej R.G."/>
            <person name="Champe M."/>
            <person name="Pfeiffer B.D."/>
            <person name="Wan K.H."/>
            <person name="Doyle C."/>
            <person name="Baxter E.G."/>
            <person name="Helt G."/>
            <person name="Nelson C.R."/>
            <person name="Miklos G.L.G."/>
            <person name="Abril J.F."/>
            <person name="Agbayani A."/>
            <person name="An H.-J."/>
            <person name="Andrews-Pfannkoch C."/>
            <person name="Baldwin D."/>
            <person name="Ballew R.M."/>
            <person name="Basu A."/>
            <person name="Baxendale J."/>
            <person name="Bayraktaroglu L."/>
            <person name="Beasley E.M."/>
            <person name="Beeson K.Y."/>
            <person name="Benos P.V."/>
            <person name="Berman B.P."/>
            <person name="Bhandari D."/>
            <person name="Bolshakov S."/>
            <person name="Borkova D."/>
            <person name="Botchan M.R."/>
            <person name="Bouck J."/>
            <person name="Brokstein P."/>
            <person name="Brottier P."/>
            <person name="Burtis K.C."/>
            <person name="Busam D.A."/>
            <person name="Butler H."/>
            <person name="Cadieu E."/>
            <person name="Center A."/>
            <person name="Chandra I."/>
            <person name="Cherry J.M."/>
            <person name="Cawley S."/>
            <person name="Dahlke C."/>
            <person name="Davenport L.B."/>
            <person name="Davies P."/>
            <person name="de Pablos B."/>
            <person name="Delcher A."/>
            <person name="Deng Z."/>
            <person name="Mays A.D."/>
            <person name="Dew I."/>
            <person name="Dietz S.M."/>
            <person name="Dodson K."/>
            <person name="Doup L.E."/>
            <person name="Downes M."/>
            <person name="Dugan-Rocha S."/>
            <person name="Dunkov B.C."/>
            <person name="Dunn P."/>
            <person name="Durbin K.J."/>
            <person name="Evangelista C.C."/>
            <person name="Ferraz C."/>
            <person name="Ferriera S."/>
            <person name="Fleischmann W."/>
            <person name="Fosler C."/>
            <person name="Gabrielian A.E."/>
            <person name="Garg N.S."/>
            <person name="Gelbart W.M."/>
            <person name="Glasser K."/>
            <person name="Glodek A."/>
            <person name="Gong F."/>
            <person name="Gorrell J.H."/>
            <person name="Gu Z."/>
            <person name="Guan P."/>
            <person name="Harris M."/>
            <person name="Harris N.L."/>
            <person name="Harvey D.A."/>
            <person name="Heiman T.J."/>
            <person name="Hernandez J.R."/>
            <person name="Houck J."/>
            <person name="Hostin D."/>
            <person name="Houston K.A."/>
            <person name="Howland T.J."/>
            <person name="Wei M.-H."/>
            <person name="Ibegwam C."/>
            <person name="Jalali M."/>
            <person name="Kalush F."/>
            <person name="Karpen G.H."/>
            <person name="Ke Z."/>
            <person name="Kennison J.A."/>
            <person name="Ketchum K.A."/>
            <person name="Kimmel B.E."/>
            <person name="Kodira C.D."/>
            <person name="Kraft C.L."/>
            <person name="Kravitz S."/>
            <person name="Kulp D."/>
            <person name="Lai Z."/>
            <person name="Lasko P."/>
            <person name="Lei Y."/>
            <person name="Levitsky A.A."/>
            <person name="Li J.H."/>
            <person name="Li Z."/>
            <person name="Liang Y."/>
            <person name="Lin X."/>
            <person name="Liu X."/>
            <person name="Mattei B."/>
            <person name="McIntosh T.C."/>
            <person name="McLeod M.P."/>
            <person name="McPherson D."/>
            <person name="Merkulov G."/>
            <person name="Milshina N.V."/>
            <person name="Mobarry C."/>
            <person name="Morris J."/>
            <person name="Moshrefi A."/>
            <person name="Mount S.M."/>
            <person name="Moy M."/>
            <person name="Murphy B."/>
            <person name="Murphy L."/>
            <person name="Muzny D.M."/>
            <person name="Nelson D.L."/>
            <person name="Nelson D.R."/>
            <person name="Nelson K.A."/>
            <person name="Nixon K."/>
            <person name="Nusskern D.R."/>
            <person name="Pacleb J.M."/>
            <person name="Palazzolo M."/>
            <person name="Pittman G.S."/>
            <person name="Pan S."/>
            <person name="Pollard J."/>
            <person name="Puri V."/>
            <person name="Reese M.G."/>
            <person name="Reinert K."/>
            <person name="Remington K."/>
            <person name="Saunders R.D.C."/>
            <person name="Scheeler F."/>
            <person name="Shen H."/>
            <person name="Shue B.C."/>
            <person name="Siden-Kiamos I."/>
            <person name="Simpson M."/>
            <person name="Skupski M.P."/>
            <person name="Smith T.J."/>
            <person name="Spier E."/>
            <person name="Spradling A.C."/>
            <person name="Stapleton M."/>
            <person name="Strong R."/>
            <person name="Sun E."/>
            <person name="Svirskas R."/>
            <person name="Tector C."/>
            <person name="Turner R."/>
            <person name="Venter E."/>
            <person name="Wang A.H."/>
            <person name="Wang X."/>
            <person name="Wang Z.-Y."/>
            <person name="Wassarman D.A."/>
            <person name="Weinstock G.M."/>
            <person name="Weissenbach J."/>
            <person name="Williams S.M."/>
            <person name="Woodage T."/>
            <person name="Worley K.C."/>
            <person name="Wu D."/>
            <person name="Yang S."/>
            <person name="Yao Q.A."/>
            <person name="Ye J."/>
            <person name="Yeh R.-F."/>
            <person name="Zaveri J.S."/>
            <person name="Zhan M."/>
            <person name="Zhang G."/>
            <person name="Zhao Q."/>
            <person name="Zheng L."/>
            <person name="Zheng X.H."/>
            <person name="Zhong F.N."/>
            <person name="Zhong W."/>
            <person name="Zhou X."/>
            <person name="Zhu S.C."/>
            <person name="Zhu X."/>
            <person name="Smith H.O."/>
            <person name="Gibbs R.A."/>
            <person name="Myers E.W."/>
            <person name="Rubin G.M."/>
            <person name="Venter J.C."/>
        </authorList>
    </citation>
    <scope>NUCLEOTIDE SEQUENCE [LARGE SCALE GENOMIC DNA]</scope>
    <source>
        <strain>Berkeley</strain>
    </source>
</reference>
<reference key="2">
    <citation type="journal article" date="2002" name="Genome Biol.">
        <title>Annotation of the Drosophila melanogaster euchromatic genome: a systematic review.</title>
        <authorList>
            <person name="Misra S."/>
            <person name="Crosby M.A."/>
            <person name="Mungall C.J."/>
            <person name="Matthews B.B."/>
            <person name="Campbell K.S."/>
            <person name="Hradecky P."/>
            <person name="Huang Y."/>
            <person name="Kaminker J.S."/>
            <person name="Millburn G.H."/>
            <person name="Prochnik S.E."/>
            <person name="Smith C.D."/>
            <person name="Tupy J.L."/>
            <person name="Whitfield E.J."/>
            <person name="Bayraktaroglu L."/>
            <person name="Berman B.P."/>
            <person name="Bettencourt B.R."/>
            <person name="Celniker S.E."/>
            <person name="de Grey A.D.N.J."/>
            <person name="Drysdale R.A."/>
            <person name="Harris N.L."/>
            <person name="Richter J."/>
            <person name="Russo S."/>
            <person name="Schroeder A.J."/>
            <person name="Shu S.Q."/>
            <person name="Stapleton M."/>
            <person name="Yamada C."/>
            <person name="Ashburner M."/>
            <person name="Gelbart W.M."/>
            <person name="Rubin G.M."/>
            <person name="Lewis S.E."/>
        </authorList>
    </citation>
    <scope>GENOME REANNOTATION</scope>
    <source>
        <strain>Berkeley</strain>
    </source>
</reference>
<reference key="3">
    <citation type="journal article" date="2002" name="Genome Biol.">
        <title>A Drosophila full-length cDNA resource.</title>
        <authorList>
            <person name="Stapleton M."/>
            <person name="Carlson J.W."/>
            <person name="Brokstein P."/>
            <person name="Yu C."/>
            <person name="Champe M."/>
            <person name="George R.A."/>
            <person name="Guarin H."/>
            <person name="Kronmiller B."/>
            <person name="Pacleb J.M."/>
            <person name="Park S."/>
            <person name="Wan K.H."/>
            <person name="Rubin G.M."/>
            <person name="Celniker S.E."/>
        </authorList>
    </citation>
    <scope>NUCLEOTIDE SEQUENCE [LARGE SCALE MRNA]</scope>
    <source>
        <strain>Berkeley</strain>
        <tissue>Head</tissue>
    </source>
</reference>
<comment type="subcellular location">
    <subcellularLocation>
        <location evidence="3">Membrane</location>
        <topology evidence="3">Multi-pass membrane protein</topology>
    </subcellularLocation>
</comment>
<comment type="similarity">
    <text evidence="3">Belongs to the LIMR family.</text>
</comment>
<keyword id="KW-0175">Coiled coil</keyword>
<keyword id="KW-0325">Glycoprotein</keyword>
<keyword id="KW-0472">Membrane</keyword>
<keyword id="KW-1185">Reference proteome</keyword>
<keyword id="KW-0812">Transmembrane</keyword>
<keyword id="KW-1133">Transmembrane helix</keyword>
<proteinExistence type="evidence at transcript level"/>
<protein>
    <recommendedName>
        <fullName>LMBR1 domain-containing protein 2 homolog</fullName>
    </recommendedName>
</protein>
<gene>
    <name type="ORF">CG8135</name>
</gene>